<comment type="function">
    <text evidence="1">Catalyzes the irreversible NADPH-dependent deamination of GMP to IMP. It functions in the conversion of nucleobase, nucleoside and nucleotide derivatives of G to A nucleotides, and in maintaining the intracellular balance of A and G nucleotides.</text>
</comment>
<comment type="catalytic activity">
    <reaction evidence="1">
        <text>IMP + NH4(+) + NADP(+) = GMP + NADPH + 2 H(+)</text>
        <dbReference type="Rhea" id="RHEA:17185"/>
        <dbReference type="ChEBI" id="CHEBI:15378"/>
        <dbReference type="ChEBI" id="CHEBI:28938"/>
        <dbReference type="ChEBI" id="CHEBI:57783"/>
        <dbReference type="ChEBI" id="CHEBI:58053"/>
        <dbReference type="ChEBI" id="CHEBI:58115"/>
        <dbReference type="ChEBI" id="CHEBI:58349"/>
        <dbReference type="EC" id="1.7.1.7"/>
    </reaction>
</comment>
<comment type="similarity">
    <text evidence="1">Belongs to the IMPDH/GMPR family. GuaC type 2 subfamily.</text>
</comment>
<sequence length="327" mass="35929">MFNDIPVFDYEDIQLIPNKCIITSRSQADTSVTLGKYQFKLPVIPANMQTIIDETIAEQLAKEGYFYIMHRFDEDSRKPFIKRMHEQGLIASISVGVKACEYEFVTSLKEDAPEFITIDIAHGHANSVIDMIKHIKTELPETFVIAGNVGTPEAVRELENAGADATKVGIGPGKVCITKVKTGFGTGGWQLAALRWCAKAARKPIIADGGIRTHGDIAKSIRFGASMVMIGSLFAGHIESPGKTVEVDGETFKEYYGSASEYQKGEHKNVEGKKILLPTKGHLSDTLTEMQQDLQSSISYAGGKDLDSLRHVDYVIVKNSIWNGDSI</sequence>
<name>GUAC_STRP3</name>
<evidence type="ECO:0000255" key="1">
    <source>
        <dbReference type="HAMAP-Rule" id="MF_01511"/>
    </source>
</evidence>
<feature type="chain" id="PRO_0000093780" description="GMP reductase">
    <location>
        <begin position="1"/>
        <end position="327"/>
    </location>
</feature>
<feature type="active site" description="Thioimidate intermediate" evidence="1">
    <location>
        <position position="176"/>
    </location>
</feature>
<feature type="binding site" evidence="1">
    <location>
        <begin position="205"/>
        <end position="228"/>
    </location>
    <ligand>
        <name>NADP(+)</name>
        <dbReference type="ChEBI" id="CHEBI:58349"/>
    </ligand>
</feature>
<accession>P0DB90</accession>
<accession>Q8K7I6</accession>
<gene>
    <name evidence="1" type="primary">guaC</name>
    <name type="ordered locus">SpyM3_0793</name>
</gene>
<reference key="1">
    <citation type="journal article" date="2002" name="Proc. Natl. Acad. Sci. U.S.A.">
        <title>Genome sequence of a serotype M3 strain of group A Streptococcus: phage-encoded toxins, the high-virulence phenotype, and clone emergence.</title>
        <authorList>
            <person name="Beres S.B."/>
            <person name="Sylva G.L."/>
            <person name="Barbian K.D."/>
            <person name="Lei B."/>
            <person name="Hoff J.S."/>
            <person name="Mammarella N.D."/>
            <person name="Liu M.-Y."/>
            <person name="Smoot J.C."/>
            <person name="Porcella S.F."/>
            <person name="Parkins L.D."/>
            <person name="Campbell D.S."/>
            <person name="Smith T.M."/>
            <person name="McCormick J.K."/>
            <person name="Leung D.Y.M."/>
            <person name="Schlievert P.M."/>
            <person name="Musser J.M."/>
        </authorList>
    </citation>
    <scope>NUCLEOTIDE SEQUENCE [LARGE SCALE GENOMIC DNA]</scope>
    <source>
        <strain>ATCC BAA-595 / MGAS315</strain>
    </source>
</reference>
<organism>
    <name type="scientific">Streptococcus pyogenes serotype M3 (strain ATCC BAA-595 / MGAS315)</name>
    <dbReference type="NCBI Taxonomy" id="198466"/>
    <lineage>
        <taxon>Bacteria</taxon>
        <taxon>Bacillati</taxon>
        <taxon>Bacillota</taxon>
        <taxon>Bacilli</taxon>
        <taxon>Lactobacillales</taxon>
        <taxon>Streptococcaceae</taxon>
        <taxon>Streptococcus</taxon>
    </lineage>
</organism>
<protein>
    <recommendedName>
        <fullName evidence="1">GMP reductase</fullName>
        <ecNumber evidence="1">1.7.1.7</ecNumber>
    </recommendedName>
    <alternativeName>
        <fullName evidence="1">Guanosine 5'-monophosphate oxidoreductase</fullName>
        <shortName evidence="1">Guanosine monophosphate reductase</shortName>
    </alternativeName>
</protein>
<dbReference type="EC" id="1.7.1.7" evidence="1"/>
<dbReference type="EMBL" id="AE014074">
    <property type="protein sequence ID" value="AAM79400.1"/>
    <property type="molecule type" value="Genomic_DNA"/>
</dbReference>
<dbReference type="RefSeq" id="WP_011054482.1">
    <property type="nucleotide sequence ID" value="NC_004070.1"/>
</dbReference>
<dbReference type="SMR" id="P0DB90"/>
<dbReference type="GeneID" id="69900878"/>
<dbReference type="KEGG" id="spg:SpyM3_0793"/>
<dbReference type="HOGENOM" id="CLU_022552_5_0_9"/>
<dbReference type="Proteomes" id="UP000000564">
    <property type="component" value="Chromosome"/>
</dbReference>
<dbReference type="GO" id="GO:0005829">
    <property type="term" value="C:cytosol"/>
    <property type="evidence" value="ECO:0007669"/>
    <property type="project" value="TreeGrafter"/>
</dbReference>
<dbReference type="GO" id="GO:1902560">
    <property type="term" value="C:GMP reductase complex"/>
    <property type="evidence" value="ECO:0007669"/>
    <property type="project" value="InterPro"/>
</dbReference>
<dbReference type="GO" id="GO:0003920">
    <property type="term" value="F:GMP reductase activity"/>
    <property type="evidence" value="ECO:0007669"/>
    <property type="project" value="UniProtKB-UniRule"/>
</dbReference>
<dbReference type="GO" id="GO:0006163">
    <property type="term" value="P:purine nucleotide metabolic process"/>
    <property type="evidence" value="ECO:0007669"/>
    <property type="project" value="UniProtKB-UniRule"/>
</dbReference>
<dbReference type="CDD" id="cd00381">
    <property type="entry name" value="IMPDH"/>
    <property type="match status" value="1"/>
</dbReference>
<dbReference type="FunFam" id="3.20.20.70:FF:000424">
    <property type="entry name" value="Inosine-5'-monophosphate dehydrogenase 2"/>
    <property type="match status" value="1"/>
</dbReference>
<dbReference type="Gene3D" id="3.20.20.70">
    <property type="entry name" value="Aldolase class I"/>
    <property type="match status" value="1"/>
</dbReference>
<dbReference type="HAMAP" id="MF_01511">
    <property type="entry name" value="GMP_reduct_type2"/>
    <property type="match status" value="1"/>
</dbReference>
<dbReference type="InterPro" id="IPR013785">
    <property type="entry name" value="Aldolase_TIM"/>
</dbReference>
<dbReference type="InterPro" id="IPR050139">
    <property type="entry name" value="GMP_reductase"/>
</dbReference>
<dbReference type="InterPro" id="IPR005994">
    <property type="entry name" value="GuaC_type_2"/>
</dbReference>
<dbReference type="InterPro" id="IPR015875">
    <property type="entry name" value="IMP_DH/GMP_Rdtase_CS"/>
</dbReference>
<dbReference type="InterPro" id="IPR001093">
    <property type="entry name" value="IMP_DH_GMPRt"/>
</dbReference>
<dbReference type="NCBIfam" id="TIGR01306">
    <property type="entry name" value="GMP_reduct_2"/>
    <property type="match status" value="1"/>
</dbReference>
<dbReference type="NCBIfam" id="NF003966">
    <property type="entry name" value="PRK05458.1"/>
    <property type="match status" value="1"/>
</dbReference>
<dbReference type="PANTHER" id="PTHR43170">
    <property type="entry name" value="GMP REDUCTASE"/>
    <property type="match status" value="1"/>
</dbReference>
<dbReference type="PANTHER" id="PTHR43170:SF5">
    <property type="entry name" value="GMP REDUCTASE"/>
    <property type="match status" value="1"/>
</dbReference>
<dbReference type="Pfam" id="PF00478">
    <property type="entry name" value="IMPDH"/>
    <property type="match status" value="1"/>
</dbReference>
<dbReference type="PIRSF" id="PIRSF036500">
    <property type="entry name" value="GMP_red_Firmic"/>
    <property type="match status" value="1"/>
</dbReference>
<dbReference type="SMART" id="SM01240">
    <property type="entry name" value="IMPDH"/>
    <property type="match status" value="1"/>
</dbReference>
<dbReference type="SUPFAM" id="SSF51412">
    <property type="entry name" value="Inosine monophosphate dehydrogenase (IMPDH)"/>
    <property type="match status" value="1"/>
</dbReference>
<dbReference type="PROSITE" id="PS00487">
    <property type="entry name" value="IMP_DH_GMP_RED"/>
    <property type="match status" value="1"/>
</dbReference>
<proteinExistence type="inferred from homology"/>
<keyword id="KW-0521">NADP</keyword>
<keyword id="KW-0560">Oxidoreductase</keyword>